<protein>
    <recommendedName>
        <fullName>Glyceraldehyde-3-phosphate dehydrogenase, glycosomal</fullName>
        <shortName>GAPDH</shortName>
        <ecNumber>1.2.1.12</ecNumber>
    </recommendedName>
</protein>
<accession>O96423</accession>
<accession>Q9UAM2</accession>
<keyword id="KW-0324">Glycolysis</keyword>
<keyword id="KW-0327">Glycosome</keyword>
<keyword id="KW-0520">NAD</keyword>
<keyword id="KW-0560">Oxidoreductase</keyword>
<keyword id="KW-0576">Peroxisome</keyword>
<comment type="catalytic activity">
    <reaction evidence="3">
        <text>D-glyceraldehyde 3-phosphate + phosphate + NAD(+) = (2R)-3-phospho-glyceroyl phosphate + NADH + H(+)</text>
        <dbReference type="Rhea" id="RHEA:10300"/>
        <dbReference type="ChEBI" id="CHEBI:15378"/>
        <dbReference type="ChEBI" id="CHEBI:43474"/>
        <dbReference type="ChEBI" id="CHEBI:57540"/>
        <dbReference type="ChEBI" id="CHEBI:57604"/>
        <dbReference type="ChEBI" id="CHEBI:57945"/>
        <dbReference type="ChEBI" id="CHEBI:59776"/>
        <dbReference type="EC" id="1.2.1.12"/>
    </reaction>
</comment>
<comment type="pathway">
    <text>Carbohydrate degradation; glycolysis; pyruvate from D-glyceraldehyde 3-phosphate: step 1/5.</text>
</comment>
<comment type="subunit">
    <text>Homotetramer.</text>
</comment>
<comment type="subcellular location">
    <subcellularLocation>
        <location>Glycosome</location>
    </subcellularLocation>
</comment>
<comment type="similarity">
    <text evidence="4">Belongs to the glyceraldehyde-3-phosphate dehydrogenase family.</text>
</comment>
<feature type="initiator methionine" description="Removed" evidence="1">
    <location>
        <position position="1"/>
    </location>
</feature>
<feature type="chain" id="PRO_0000145527" description="Glyceraldehyde-3-phosphate dehydrogenase, glycosomal">
    <location>
        <begin position="2"/>
        <end position="361"/>
    </location>
</feature>
<feature type="short sequence motif" description="Microbody targeting signal" evidence="2">
    <location>
        <begin position="359"/>
        <end position="361"/>
    </location>
</feature>
<feature type="active site" description="Nucleophile" evidence="3">
    <location>
        <position position="167"/>
    </location>
</feature>
<feature type="binding site" evidence="1">
    <location>
        <begin position="13"/>
        <end position="14"/>
    </location>
    <ligand>
        <name>NAD(+)</name>
        <dbReference type="ChEBI" id="CHEBI:57540"/>
    </ligand>
</feature>
<feature type="binding site" evidence="1">
    <location>
        <position position="39"/>
    </location>
    <ligand>
        <name>NAD(+)</name>
        <dbReference type="ChEBI" id="CHEBI:57540"/>
    </ligand>
</feature>
<feature type="binding site" evidence="1">
    <location>
        <position position="93"/>
    </location>
    <ligand>
        <name>NAD(+)</name>
        <dbReference type="ChEBI" id="CHEBI:57540"/>
    </ligand>
</feature>
<feature type="binding site" evidence="1">
    <location>
        <begin position="166"/>
        <end position="168"/>
    </location>
    <ligand>
        <name>D-glyceraldehyde 3-phosphate</name>
        <dbReference type="ChEBI" id="CHEBI:59776"/>
    </ligand>
</feature>
<feature type="binding site" evidence="1">
    <location>
        <position position="198"/>
    </location>
    <ligand>
        <name>D-glyceraldehyde 3-phosphate</name>
        <dbReference type="ChEBI" id="CHEBI:59776"/>
    </ligand>
</feature>
<feature type="binding site" evidence="1">
    <location>
        <begin position="227"/>
        <end position="228"/>
    </location>
    <ligand>
        <name>D-glyceraldehyde 3-phosphate</name>
        <dbReference type="ChEBI" id="CHEBI:59776"/>
    </ligand>
</feature>
<feature type="binding site" evidence="1">
    <location>
        <position position="250"/>
    </location>
    <ligand>
        <name>D-glyceraldehyde 3-phosphate</name>
        <dbReference type="ChEBI" id="CHEBI:59776"/>
    </ligand>
</feature>
<feature type="binding site" evidence="1">
    <location>
        <position position="336"/>
    </location>
    <ligand>
        <name>NAD(+)</name>
        <dbReference type="ChEBI" id="CHEBI:57540"/>
    </ligand>
</feature>
<feature type="site" description="Activates thiol group during catalysis" evidence="1">
    <location>
        <position position="195"/>
    </location>
</feature>
<feature type="sequence conflict" description="In Ref. 2; AAD17497." evidence="4" ref="2">
    <original>D</original>
    <variation>E</variation>
    <location>
        <position position="92"/>
    </location>
</feature>
<feature type="sequence conflict" description="In Ref. 2; AAD17497." evidence="4" ref="2">
    <original>A</original>
    <variation>G</variation>
    <location>
        <position position="138"/>
    </location>
</feature>
<feature type="sequence conflict" description="In Ref. 2; AAD17497." evidence="4" ref="2">
    <original>F</original>
    <variation>L</variation>
    <location>
        <position position="249"/>
    </location>
</feature>
<feature type="sequence conflict" description="In Ref. 2; AAD17497." evidence="4" ref="2">
    <original>F</original>
    <variation>Y</variation>
    <location>
        <position position="292"/>
    </location>
</feature>
<dbReference type="EC" id="1.2.1.12"/>
<dbReference type="EMBL" id="AF047493">
    <property type="protein sequence ID" value="AAD02465.1"/>
    <property type="molecule type" value="Genomic_DNA"/>
</dbReference>
<dbReference type="EMBL" id="AF053739">
    <property type="protein sequence ID" value="AAD17497.1"/>
    <property type="molecule type" value="Genomic_DNA"/>
</dbReference>
<dbReference type="SMR" id="O96423"/>
<dbReference type="VEuPathDB" id="TriTrypDB:CFAC1_260054400"/>
<dbReference type="UniPathway" id="UPA00109">
    <property type="reaction ID" value="UER00184"/>
</dbReference>
<dbReference type="GO" id="GO:0005829">
    <property type="term" value="C:cytosol"/>
    <property type="evidence" value="ECO:0007669"/>
    <property type="project" value="TreeGrafter"/>
</dbReference>
<dbReference type="GO" id="GO:0020015">
    <property type="term" value="C:glycosome"/>
    <property type="evidence" value="ECO:0007669"/>
    <property type="project" value="UniProtKB-SubCell"/>
</dbReference>
<dbReference type="GO" id="GO:0004365">
    <property type="term" value="F:glyceraldehyde-3-phosphate dehydrogenase (NAD+) (phosphorylating) activity"/>
    <property type="evidence" value="ECO:0007669"/>
    <property type="project" value="UniProtKB-EC"/>
</dbReference>
<dbReference type="GO" id="GO:0051287">
    <property type="term" value="F:NAD binding"/>
    <property type="evidence" value="ECO:0007669"/>
    <property type="project" value="InterPro"/>
</dbReference>
<dbReference type="GO" id="GO:0050661">
    <property type="term" value="F:NADP binding"/>
    <property type="evidence" value="ECO:0007669"/>
    <property type="project" value="InterPro"/>
</dbReference>
<dbReference type="GO" id="GO:0006006">
    <property type="term" value="P:glucose metabolic process"/>
    <property type="evidence" value="ECO:0007669"/>
    <property type="project" value="InterPro"/>
</dbReference>
<dbReference type="GO" id="GO:0006096">
    <property type="term" value="P:glycolytic process"/>
    <property type="evidence" value="ECO:0007669"/>
    <property type="project" value="UniProtKB-UniPathway"/>
</dbReference>
<dbReference type="CDD" id="cd18126">
    <property type="entry name" value="GAPDH_I_C"/>
    <property type="match status" value="1"/>
</dbReference>
<dbReference type="CDD" id="cd05214">
    <property type="entry name" value="GAPDH_I_N"/>
    <property type="match status" value="1"/>
</dbReference>
<dbReference type="FunFam" id="3.30.360.10:FF:000001">
    <property type="entry name" value="Glyceraldehyde-3-phosphate dehydrogenase"/>
    <property type="match status" value="1"/>
</dbReference>
<dbReference type="FunFam" id="3.40.50.720:FF:000001">
    <property type="entry name" value="Glyceraldehyde-3-phosphate dehydrogenase"/>
    <property type="match status" value="1"/>
</dbReference>
<dbReference type="Gene3D" id="3.30.360.10">
    <property type="entry name" value="Dihydrodipicolinate Reductase, domain 2"/>
    <property type="match status" value="1"/>
</dbReference>
<dbReference type="Gene3D" id="3.40.50.720">
    <property type="entry name" value="NAD(P)-binding Rossmann-like Domain"/>
    <property type="match status" value="1"/>
</dbReference>
<dbReference type="InterPro" id="IPR020831">
    <property type="entry name" value="GlycerAld/Erythrose_P_DH"/>
</dbReference>
<dbReference type="InterPro" id="IPR020830">
    <property type="entry name" value="GlycerAld_3-P_DH_AS"/>
</dbReference>
<dbReference type="InterPro" id="IPR020829">
    <property type="entry name" value="GlycerAld_3-P_DH_cat"/>
</dbReference>
<dbReference type="InterPro" id="IPR020828">
    <property type="entry name" value="GlycerAld_3-P_DH_NAD(P)-bd"/>
</dbReference>
<dbReference type="InterPro" id="IPR006424">
    <property type="entry name" value="Glyceraldehyde-3-P_DH_1"/>
</dbReference>
<dbReference type="InterPro" id="IPR036291">
    <property type="entry name" value="NAD(P)-bd_dom_sf"/>
</dbReference>
<dbReference type="NCBIfam" id="TIGR01534">
    <property type="entry name" value="GAPDH-I"/>
    <property type="match status" value="1"/>
</dbReference>
<dbReference type="PANTHER" id="PTHR10836">
    <property type="entry name" value="GLYCERALDEHYDE 3-PHOSPHATE DEHYDROGENASE"/>
    <property type="match status" value="1"/>
</dbReference>
<dbReference type="PANTHER" id="PTHR10836:SF76">
    <property type="entry name" value="GLYCERALDEHYDE-3-PHOSPHATE DEHYDROGENASE-RELATED"/>
    <property type="match status" value="1"/>
</dbReference>
<dbReference type="Pfam" id="PF02800">
    <property type="entry name" value="Gp_dh_C"/>
    <property type="match status" value="1"/>
</dbReference>
<dbReference type="Pfam" id="PF00044">
    <property type="entry name" value="Gp_dh_N"/>
    <property type="match status" value="1"/>
</dbReference>
<dbReference type="PIRSF" id="PIRSF000149">
    <property type="entry name" value="GAP_DH"/>
    <property type="match status" value="1"/>
</dbReference>
<dbReference type="PRINTS" id="PR00078">
    <property type="entry name" value="G3PDHDRGNASE"/>
</dbReference>
<dbReference type="SMART" id="SM00846">
    <property type="entry name" value="Gp_dh_N"/>
    <property type="match status" value="1"/>
</dbReference>
<dbReference type="SUPFAM" id="SSF55347">
    <property type="entry name" value="Glyceraldehyde-3-phosphate dehydrogenase-like, C-terminal domain"/>
    <property type="match status" value="1"/>
</dbReference>
<dbReference type="SUPFAM" id="SSF51735">
    <property type="entry name" value="NAD(P)-binding Rossmann-fold domains"/>
    <property type="match status" value="1"/>
</dbReference>
<dbReference type="PROSITE" id="PS00071">
    <property type="entry name" value="GAPDH"/>
    <property type="match status" value="1"/>
</dbReference>
<proteinExistence type="inferred from homology"/>
<name>G3PG_CRIFA</name>
<gene>
    <name type="primary">GAPDG</name>
</gene>
<reference key="1">
    <citation type="journal article" date="1998" name="J. Mol. Evol.">
        <title>Comparison and evolutionary analysis of the glycosomal glyceraldehyde-3-phosphate dehydrogenase from different Kinetoplastida.</title>
        <authorList>
            <person name="Hannaert V."/>
            <person name="Opperdoes F.R."/>
            <person name="Michels P.A.M."/>
        </authorList>
    </citation>
    <scope>NUCLEOTIDE SEQUENCE [GENOMIC DNA]</scope>
    <source>
        <strain>ATCC 11745</strain>
    </source>
</reference>
<reference key="2">
    <citation type="submission" date="1998-03" db="EMBL/GenBank/DDBJ databases">
        <authorList>
            <person name="Robello C."/>
        </authorList>
    </citation>
    <scope>NUCLEOTIDE SEQUENCE [GENOMIC DNA] OF 7-347</scope>
</reference>
<organism>
    <name type="scientific">Crithidia fasciculata</name>
    <dbReference type="NCBI Taxonomy" id="5656"/>
    <lineage>
        <taxon>Eukaryota</taxon>
        <taxon>Discoba</taxon>
        <taxon>Euglenozoa</taxon>
        <taxon>Kinetoplastea</taxon>
        <taxon>Metakinetoplastina</taxon>
        <taxon>Trypanosomatida</taxon>
        <taxon>Trypanosomatidae</taxon>
        <taxon>Leishmaniinae</taxon>
        <taxon>Crithidia</taxon>
    </lineage>
</organism>
<sequence>MAPIKVGINGFGRIGRMVFQSMCEDNVLGTELDVVAVVDMSTDAEYFAYQMKFDTVHGRPKYTVEVAKSSPSAKKPDVLVVNGHRILCVKADRNPADLPWGKLGVDYVIESTGLFTDKAKAEGHVKGGAKKVVISAPASGGAKTIVMGVNQHEYNPATHHVVSNASCTTNCLAPIVHVLTKENFGIETGLMTTIHSYTATQKTVDGVSIKDWRGGRAAAVNIIPSTTGAAKAVGMVIPSTKGKLTGMSFRVPTPDVSVVDLTFRATRDTSIQEIDAALKKASQTYMKGILGFTDEELVSSDFINDARSSIYDSKATLQNNLPGEKRFFKVVSWYDNEWGYSHRVVDLVRFMGAKDRSSSKL</sequence>
<evidence type="ECO:0000250" key="1"/>
<evidence type="ECO:0000255" key="2"/>
<evidence type="ECO:0000255" key="3">
    <source>
        <dbReference type="PROSITE-ProRule" id="PRU10009"/>
    </source>
</evidence>
<evidence type="ECO:0000305" key="4"/>